<gene>
    <name evidence="1" type="primary">patA</name>
    <name type="ordered locus">ECIAI39_3571</name>
</gene>
<name>PAT_ECO7I</name>
<sequence>MNRLPSSASALACSAHALNLIEKRTLDHEEMKALNREVIEYFKEHVNPGFLEYRKSVTAGGDYGAVEWQAGSLNTLVDTQGQEFIDCLGGFGIFNVGHRNPVVVSAVQNQLAKQPLHSQELLDPLRAMLAKTLAALTPGKLKYSFFCNSGTESVEAALKLAKAYQSPRGKFTFIATSGAFHGKSLGALSATAKSTFRKPFMPLLPGFRHVPFGNIEAMRTALNECKKTGDDVAAVILEPIQGEGGVILPPPGYLTAVRKLCDEFGALMILDEVQTGMGRTGKMFACEHENVQPDILCLAKALGGGVMPIGATIATEEVFSVLFDNPFLHTTTFGGNPLTCAAALATINVLLEQNLPAQAEQKGDMLLDGFRQLAREYPDLVQEARGKGMLMAIEFVDNEIGYNFASEMFRQRVLVAGTLNNAKTIRIEPPLTLTIEQCELVIKAARKALAAMRVSVEEA</sequence>
<keyword id="KW-0032">Aminotransferase</keyword>
<keyword id="KW-0663">Pyridoxal phosphate</keyword>
<keyword id="KW-0808">Transferase</keyword>
<feature type="chain" id="PRO_0000379548" description="Putrescine aminotransferase">
    <location>
        <begin position="1"/>
        <end position="459"/>
    </location>
</feature>
<feature type="binding site" description="in other chain" evidence="1">
    <location>
        <begin position="150"/>
        <end position="151"/>
    </location>
    <ligand>
        <name>pyridoxal 5'-phosphate</name>
        <dbReference type="ChEBI" id="CHEBI:597326"/>
        <note>ligand shared between dimeric partners</note>
    </ligand>
</feature>
<feature type="binding site" description="in other chain" evidence="1">
    <location>
        <position position="274"/>
    </location>
    <ligand>
        <name>pyridoxal 5'-phosphate</name>
        <dbReference type="ChEBI" id="CHEBI:597326"/>
        <note>ligand shared between dimeric partners</note>
    </ligand>
</feature>
<feature type="binding site" evidence="1">
    <location>
        <position position="332"/>
    </location>
    <ligand>
        <name>pyridoxal 5'-phosphate</name>
        <dbReference type="ChEBI" id="CHEBI:597326"/>
        <note>ligand shared between dimeric partners</note>
    </ligand>
</feature>
<feature type="modified residue" description="N6-(pyridoxal phosphate)lysine" evidence="1">
    <location>
        <position position="300"/>
    </location>
</feature>
<accession>B7NJT8</accession>
<comment type="function">
    <text evidence="1">Catalyzes the aminotransferase reaction from putrescine to 2-oxoglutarate, leading to glutamate and 4-aminobutanal, which spontaneously cyclizes to form 1-pyrroline. This is the first step in one of two pathways for putrescine degradation, where putrescine is converted into 4-aminobutanoate (gamma-aminobutyrate or GABA) via 4-aminobutanal. Also functions as a cadaverine transaminase in a a L-lysine degradation pathway to succinate that proceeds via cadaverine, glutarate and L-2-hydroxyglutarate.</text>
</comment>
<comment type="catalytic activity">
    <reaction evidence="1">
        <text>an alkane-alpha,omega-diamine + 2-oxoglutarate = an omega-aminoaldehyde + L-glutamate</text>
        <dbReference type="Rhea" id="RHEA:18217"/>
        <dbReference type="Rhea" id="RHEA-COMP:9766"/>
        <dbReference type="Rhea" id="RHEA-COMP:12750"/>
        <dbReference type="ChEBI" id="CHEBI:16810"/>
        <dbReference type="ChEBI" id="CHEBI:29985"/>
        <dbReference type="ChEBI" id="CHEBI:70977"/>
        <dbReference type="ChEBI" id="CHEBI:133427"/>
        <dbReference type="EC" id="2.6.1.29"/>
    </reaction>
    <physiologicalReaction direction="left-to-right" evidence="1">
        <dbReference type="Rhea" id="RHEA:18218"/>
    </physiologicalReaction>
</comment>
<comment type="catalytic activity">
    <reaction evidence="1">
        <text>putrescine + 2-oxoglutarate = 1-pyrroline + L-glutamate + H2O</text>
        <dbReference type="Rhea" id="RHEA:12268"/>
        <dbReference type="ChEBI" id="CHEBI:15377"/>
        <dbReference type="ChEBI" id="CHEBI:16810"/>
        <dbReference type="ChEBI" id="CHEBI:29985"/>
        <dbReference type="ChEBI" id="CHEBI:36781"/>
        <dbReference type="ChEBI" id="CHEBI:326268"/>
        <dbReference type="EC" id="2.6.1.82"/>
    </reaction>
    <physiologicalReaction direction="left-to-right" evidence="1">
        <dbReference type="Rhea" id="RHEA:12269"/>
    </physiologicalReaction>
</comment>
<comment type="catalytic activity">
    <reaction evidence="1">
        <text>cadaverine + 2-oxoglutarate = 5-aminopentanal + L-glutamate</text>
        <dbReference type="Rhea" id="RHEA:61624"/>
        <dbReference type="ChEBI" id="CHEBI:16810"/>
        <dbReference type="ChEBI" id="CHEBI:29985"/>
        <dbReference type="ChEBI" id="CHEBI:58384"/>
        <dbReference type="ChEBI" id="CHEBI:144896"/>
    </reaction>
    <physiologicalReaction direction="left-to-right" evidence="1">
        <dbReference type="Rhea" id="RHEA:61625"/>
    </physiologicalReaction>
</comment>
<comment type="cofactor">
    <cofactor evidence="1">
        <name>pyridoxal 5'-phosphate</name>
        <dbReference type="ChEBI" id="CHEBI:597326"/>
    </cofactor>
</comment>
<comment type="pathway">
    <text evidence="1">Amine and polyamine degradation; putrescine degradation; 4-aminobutanal from putrescine (transaminase route): step 1/1.</text>
</comment>
<comment type="similarity">
    <text evidence="1">Belongs to the class-III pyridoxal-phosphate-dependent aminotransferase family. Putrescine aminotransferase subfamily.</text>
</comment>
<comment type="sequence caution" evidence="2">
    <conflict type="erroneous initiation">
        <sequence resource="EMBL-CDS" id="CAR19687"/>
    </conflict>
</comment>
<organism>
    <name type="scientific">Escherichia coli O7:K1 (strain IAI39 / ExPEC)</name>
    <dbReference type="NCBI Taxonomy" id="585057"/>
    <lineage>
        <taxon>Bacteria</taxon>
        <taxon>Pseudomonadati</taxon>
        <taxon>Pseudomonadota</taxon>
        <taxon>Gammaproteobacteria</taxon>
        <taxon>Enterobacterales</taxon>
        <taxon>Enterobacteriaceae</taxon>
        <taxon>Escherichia</taxon>
    </lineage>
</organism>
<protein>
    <recommendedName>
        <fullName evidence="1">Putrescine aminotransferase</fullName>
        <shortName evidence="1">PAT</shortName>
        <shortName evidence="1">PATase</shortName>
        <ecNumber evidence="1">2.6.1.82</ecNumber>
    </recommendedName>
    <alternativeName>
        <fullName evidence="1">Cadaverine transaminase</fullName>
    </alternativeName>
    <alternativeName>
        <fullName evidence="1">Diamine transaminase</fullName>
        <ecNumber evidence="1">2.6.1.29</ecNumber>
    </alternativeName>
    <alternativeName>
        <fullName evidence="1">Putrescine transaminase</fullName>
    </alternativeName>
    <alternativeName>
        <fullName evidence="1">Putrescine--2-oxoglutaric acid transaminase</fullName>
    </alternativeName>
</protein>
<proteinExistence type="inferred from homology"/>
<reference key="1">
    <citation type="journal article" date="2009" name="PLoS Genet.">
        <title>Organised genome dynamics in the Escherichia coli species results in highly diverse adaptive paths.</title>
        <authorList>
            <person name="Touchon M."/>
            <person name="Hoede C."/>
            <person name="Tenaillon O."/>
            <person name="Barbe V."/>
            <person name="Baeriswyl S."/>
            <person name="Bidet P."/>
            <person name="Bingen E."/>
            <person name="Bonacorsi S."/>
            <person name="Bouchier C."/>
            <person name="Bouvet O."/>
            <person name="Calteau A."/>
            <person name="Chiapello H."/>
            <person name="Clermont O."/>
            <person name="Cruveiller S."/>
            <person name="Danchin A."/>
            <person name="Diard M."/>
            <person name="Dossat C."/>
            <person name="Karoui M.E."/>
            <person name="Frapy E."/>
            <person name="Garry L."/>
            <person name="Ghigo J.M."/>
            <person name="Gilles A.M."/>
            <person name="Johnson J."/>
            <person name="Le Bouguenec C."/>
            <person name="Lescat M."/>
            <person name="Mangenot S."/>
            <person name="Martinez-Jehanne V."/>
            <person name="Matic I."/>
            <person name="Nassif X."/>
            <person name="Oztas S."/>
            <person name="Petit M.A."/>
            <person name="Pichon C."/>
            <person name="Rouy Z."/>
            <person name="Ruf C.S."/>
            <person name="Schneider D."/>
            <person name="Tourret J."/>
            <person name="Vacherie B."/>
            <person name="Vallenet D."/>
            <person name="Medigue C."/>
            <person name="Rocha E.P.C."/>
            <person name="Denamur E."/>
        </authorList>
    </citation>
    <scope>NUCLEOTIDE SEQUENCE [LARGE SCALE GENOMIC DNA]</scope>
    <source>
        <strain>IAI39 / ExPEC</strain>
    </source>
</reference>
<evidence type="ECO:0000255" key="1">
    <source>
        <dbReference type="HAMAP-Rule" id="MF_01276"/>
    </source>
</evidence>
<evidence type="ECO:0000305" key="2"/>
<dbReference type="EC" id="2.6.1.82" evidence="1"/>
<dbReference type="EC" id="2.6.1.29" evidence="1"/>
<dbReference type="EMBL" id="CU928164">
    <property type="protein sequence ID" value="CAR19687.1"/>
    <property type="status" value="ALT_INIT"/>
    <property type="molecule type" value="Genomic_DNA"/>
</dbReference>
<dbReference type="RefSeq" id="YP_002409475.1">
    <property type="nucleotide sequence ID" value="NC_011750.1"/>
</dbReference>
<dbReference type="SMR" id="B7NJT8"/>
<dbReference type="STRING" id="585057.ECIAI39_3571"/>
<dbReference type="KEGG" id="ect:ECIAI39_3571"/>
<dbReference type="PATRIC" id="fig|585057.6.peg.3701"/>
<dbReference type="HOGENOM" id="CLU_016922_10_0_6"/>
<dbReference type="UniPathway" id="UPA00188">
    <property type="reaction ID" value="UER00290"/>
</dbReference>
<dbReference type="Proteomes" id="UP000000749">
    <property type="component" value="Chromosome"/>
</dbReference>
<dbReference type="GO" id="GO:0019161">
    <property type="term" value="F:diamine transaminase activity"/>
    <property type="evidence" value="ECO:0007669"/>
    <property type="project" value="UniProtKB-EC"/>
</dbReference>
<dbReference type="GO" id="GO:0042802">
    <property type="term" value="F:identical protein binding"/>
    <property type="evidence" value="ECO:0007669"/>
    <property type="project" value="TreeGrafter"/>
</dbReference>
<dbReference type="GO" id="GO:0033094">
    <property type="term" value="F:putrescine--2-oxoglutarate transaminase activity"/>
    <property type="evidence" value="ECO:0007669"/>
    <property type="project" value="UniProtKB-UniRule"/>
</dbReference>
<dbReference type="GO" id="GO:0030170">
    <property type="term" value="F:pyridoxal phosphate binding"/>
    <property type="evidence" value="ECO:0007669"/>
    <property type="project" value="UniProtKB-UniRule"/>
</dbReference>
<dbReference type="GO" id="GO:0019477">
    <property type="term" value="P:L-lysine catabolic process"/>
    <property type="evidence" value="ECO:0007669"/>
    <property type="project" value="UniProtKB-UniRule"/>
</dbReference>
<dbReference type="GO" id="GO:0009447">
    <property type="term" value="P:putrescine catabolic process"/>
    <property type="evidence" value="ECO:0007669"/>
    <property type="project" value="UniProtKB-UniRule"/>
</dbReference>
<dbReference type="CDD" id="cd00610">
    <property type="entry name" value="OAT_like"/>
    <property type="match status" value="1"/>
</dbReference>
<dbReference type="FunFam" id="3.40.640.10:FF:000004">
    <property type="entry name" value="Acetylornithine aminotransferase"/>
    <property type="match status" value="1"/>
</dbReference>
<dbReference type="Gene3D" id="3.90.1150.10">
    <property type="entry name" value="Aspartate Aminotransferase, domain 1"/>
    <property type="match status" value="1"/>
</dbReference>
<dbReference type="Gene3D" id="3.40.640.10">
    <property type="entry name" value="Type I PLP-dependent aspartate aminotransferase-like (Major domain)"/>
    <property type="match status" value="1"/>
</dbReference>
<dbReference type="HAMAP" id="MF_01276">
    <property type="entry name" value="Putres_aminotrans_3"/>
    <property type="match status" value="1"/>
</dbReference>
<dbReference type="InterPro" id="IPR005814">
    <property type="entry name" value="Aminotrans_3"/>
</dbReference>
<dbReference type="InterPro" id="IPR049704">
    <property type="entry name" value="Aminotrans_3_PPA_site"/>
</dbReference>
<dbReference type="InterPro" id="IPR050103">
    <property type="entry name" value="Class-III_PLP-dep_AT"/>
</dbReference>
<dbReference type="InterPro" id="IPR017747">
    <property type="entry name" value="Putrescine_aminotransferase"/>
</dbReference>
<dbReference type="InterPro" id="IPR015424">
    <property type="entry name" value="PyrdxlP-dep_Trfase"/>
</dbReference>
<dbReference type="InterPro" id="IPR015421">
    <property type="entry name" value="PyrdxlP-dep_Trfase_major"/>
</dbReference>
<dbReference type="InterPro" id="IPR015422">
    <property type="entry name" value="PyrdxlP-dep_Trfase_small"/>
</dbReference>
<dbReference type="NCBIfam" id="NF008570">
    <property type="entry name" value="PRK11522.1"/>
    <property type="match status" value="1"/>
</dbReference>
<dbReference type="NCBIfam" id="TIGR03372">
    <property type="entry name" value="putres_am_tran"/>
    <property type="match status" value="1"/>
</dbReference>
<dbReference type="PANTHER" id="PTHR11986">
    <property type="entry name" value="AMINOTRANSFERASE CLASS III"/>
    <property type="match status" value="1"/>
</dbReference>
<dbReference type="PANTHER" id="PTHR11986:SF112">
    <property type="entry name" value="PUTRESCINE AMINOTRANSFERASE"/>
    <property type="match status" value="1"/>
</dbReference>
<dbReference type="Pfam" id="PF00202">
    <property type="entry name" value="Aminotran_3"/>
    <property type="match status" value="1"/>
</dbReference>
<dbReference type="PIRSF" id="PIRSF000521">
    <property type="entry name" value="Transaminase_4ab_Lys_Orn"/>
    <property type="match status" value="1"/>
</dbReference>
<dbReference type="SUPFAM" id="SSF53383">
    <property type="entry name" value="PLP-dependent transferases"/>
    <property type="match status" value="1"/>
</dbReference>
<dbReference type="PROSITE" id="PS00600">
    <property type="entry name" value="AA_TRANSFER_CLASS_3"/>
    <property type="match status" value="1"/>
</dbReference>